<gene>
    <name evidence="1" type="primary">hisA</name>
    <name type="ordered locus">PPA1156</name>
</gene>
<organism>
    <name type="scientific">Cutibacterium acnes (strain DSM 16379 / KPA171202)</name>
    <name type="common">Propionibacterium acnes</name>
    <dbReference type="NCBI Taxonomy" id="267747"/>
    <lineage>
        <taxon>Bacteria</taxon>
        <taxon>Bacillati</taxon>
        <taxon>Actinomycetota</taxon>
        <taxon>Actinomycetes</taxon>
        <taxon>Propionibacteriales</taxon>
        <taxon>Propionibacteriaceae</taxon>
        <taxon>Cutibacterium</taxon>
    </lineage>
</organism>
<evidence type="ECO:0000255" key="1">
    <source>
        <dbReference type="HAMAP-Rule" id="MF_01014"/>
    </source>
</evidence>
<reference key="1">
    <citation type="journal article" date="2004" name="Science">
        <title>The complete genome sequence of Propionibacterium acnes, a commensal of human skin.</title>
        <authorList>
            <person name="Brueggemann H."/>
            <person name="Henne A."/>
            <person name="Hoster F."/>
            <person name="Liesegang H."/>
            <person name="Wiezer A."/>
            <person name="Strittmatter A."/>
            <person name="Hujer S."/>
            <person name="Duerre P."/>
            <person name="Gottschalk G."/>
        </authorList>
    </citation>
    <scope>NUCLEOTIDE SEQUENCE [LARGE SCALE GENOMIC DNA]</scope>
    <source>
        <strain>DSM 16379 / KPA171202</strain>
    </source>
</reference>
<dbReference type="EC" id="5.3.1.16" evidence="1"/>
<dbReference type="EMBL" id="AE017283">
    <property type="protein sequence ID" value="AAT82905.1"/>
    <property type="molecule type" value="Genomic_DNA"/>
</dbReference>
<dbReference type="SMR" id="Q6A8L1"/>
<dbReference type="EnsemblBacteria" id="AAT82905">
    <property type="protein sequence ID" value="AAT82905"/>
    <property type="gene ID" value="PPA1156"/>
</dbReference>
<dbReference type="KEGG" id="pac:PPA1156"/>
<dbReference type="eggNOG" id="COG0106">
    <property type="taxonomic scope" value="Bacteria"/>
</dbReference>
<dbReference type="HOGENOM" id="CLU_048577_1_1_11"/>
<dbReference type="UniPathway" id="UPA00031">
    <property type="reaction ID" value="UER00009"/>
</dbReference>
<dbReference type="Proteomes" id="UP000000603">
    <property type="component" value="Chromosome"/>
</dbReference>
<dbReference type="GO" id="GO:0005737">
    <property type="term" value="C:cytoplasm"/>
    <property type="evidence" value="ECO:0007669"/>
    <property type="project" value="UniProtKB-SubCell"/>
</dbReference>
<dbReference type="GO" id="GO:0003949">
    <property type="term" value="F:1-(5-phosphoribosyl)-5-[(5-phosphoribosylamino)methylideneamino]imidazole-4-carboxamide isomerase activity"/>
    <property type="evidence" value="ECO:0007669"/>
    <property type="project" value="UniProtKB-UniRule"/>
</dbReference>
<dbReference type="GO" id="GO:0004640">
    <property type="term" value="F:phosphoribosylanthranilate isomerase activity"/>
    <property type="evidence" value="ECO:0007669"/>
    <property type="project" value="InterPro"/>
</dbReference>
<dbReference type="GO" id="GO:0000105">
    <property type="term" value="P:L-histidine biosynthetic process"/>
    <property type="evidence" value="ECO:0007669"/>
    <property type="project" value="UniProtKB-UniRule"/>
</dbReference>
<dbReference type="GO" id="GO:0000162">
    <property type="term" value="P:L-tryptophan biosynthetic process"/>
    <property type="evidence" value="ECO:0007669"/>
    <property type="project" value="InterPro"/>
</dbReference>
<dbReference type="CDD" id="cd04732">
    <property type="entry name" value="HisA"/>
    <property type="match status" value="1"/>
</dbReference>
<dbReference type="FunFam" id="3.20.20.70:FF:000009">
    <property type="entry name" value="1-(5-phosphoribosyl)-5-[(5-phosphoribosylamino)methylideneamino] imidazole-4-carboxamide isomerase"/>
    <property type="match status" value="1"/>
</dbReference>
<dbReference type="Gene3D" id="3.20.20.70">
    <property type="entry name" value="Aldolase class I"/>
    <property type="match status" value="1"/>
</dbReference>
<dbReference type="HAMAP" id="MF_01014">
    <property type="entry name" value="HisA"/>
    <property type="match status" value="1"/>
</dbReference>
<dbReference type="InterPro" id="IPR013785">
    <property type="entry name" value="Aldolase_TIM"/>
</dbReference>
<dbReference type="InterPro" id="IPR006062">
    <property type="entry name" value="His_biosynth"/>
</dbReference>
<dbReference type="InterPro" id="IPR010188">
    <property type="entry name" value="HisA/PriA_Actinobacteria"/>
</dbReference>
<dbReference type="InterPro" id="IPR044524">
    <property type="entry name" value="Isoase_HisA-like"/>
</dbReference>
<dbReference type="InterPro" id="IPR023016">
    <property type="entry name" value="Isoase_HisA-like_bact"/>
</dbReference>
<dbReference type="InterPro" id="IPR011060">
    <property type="entry name" value="RibuloseP-bd_barrel"/>
</dbReference>
<dbReference type="NCBIfam" id="TIGR01919">
    <property type="entry name" value="hisA-trpF"/>
    <property type="match status" value="1"/>
</dbReference>
<dbReference type="PANTHER" id="PTHR43090">
    <property type="entry name" value="1-(5-PHOSPHORIBOSYL)-5-[(5-PHOSPHORIBOSYLAMINO)METHYLIDENEAMINO] IMIDAZOLE-4-CARBOXAMIDE ISOMERASE"/>
    <property type="match status" value="1"/>
</dbReference>
<dbReference type="PANTHER" id="PTHR43090:SF2">
    <property type="entry name" value="1-(5-PHOSPHORIBOSYL)-5-[(5-PHOSPHORIBOSYLAMINO)METHYLIDENEAMINO] IMIDAZOLE-4-CARBOXAMIDE ISOMERASE"/>
    <property type="match status" value="1"/>
</dbReference>
<dbReference type="Pfam" id="PF00977">
    <property type="entry name" value="His_biosynth"/>
    <property type="match status" value="1"/>
</dbReference>
<dbReference type="SUPFAM" id="SSF51366">
    <property type="entry name" value="Ribulose-phoshate binding barrel"/>
    <property type="match status" value="1"/>
</dbReference>
<accession>Q6A8L1</accession>
<feature type="chain" id="PRO_0000142034" description="1-(5-phosphoribosyl)-5-[(5-phosphoribosylamino)methylideneamino] imidazole-4-carboxamide isomerase">
    <location>
        <begin position="1"/>
        <end position="255"/>
    </location>
</feature>
<feature type="active site" description="Proton acceptor" evidence="1">
    <location>
        <position position="12"/>
    </location>
</feature>
<feature type="active site" description="Proton donor" evidence="1">
    <location>
        <position position="131"/>
    </location>
</feature>
<sequence>MTGELTLLPAVDVQGGRAVQLQQGVASSERAFGDPLDVAQKWQGLGAQWIHLVDLDAAFGHGSNTKIISSVVEQLDINVEVSGGIRDQRSLESALSAGATRVNIGTAALEDPQWCDEVVGRYGEQVAIGLDVRGDQLAARGWTREGGKVLDVLARLEDAGCRRYVVTDVASDGMLTGPNYELLGRICARTQGKVVASGGIAALEDLRRLRGLVPIGVEGAIVGTALYVGNFTLPAALDVCRAPIPADSSPMPPTD</sequence>
<proteinExistence type="inferred from homology"/>
<comment type="catalytic activity">
    <reaction evidence="1">
        <text>1-(5-phospho-beta-D-ribosyl)-5-[(5-phospho-beta-D-ribosylamino)methylideneamino]imidazole-4-carboxamide = 5-[(5-phospho-1-deoxy-D-ribulos-1-ylimino)methylamino]-1-(5-phospho-beta-D-ribosyl)imidazole-4-carboxamide</text>
        <dbReference type="Rhea" id="RHEA:15469"/>
        <dbReference type="ChEBI" id="CHEBI:58435"/>
        <dbReference type="ChEBI" id="CHEBI:58525"/>
        <dbReference type="EC" id="5.3.1.16"/>
    </reaction>
</comment>
<comment type="pathway">
    <text evidence="1">Amino-acid biosynthesis; L-histidine biosynthesis; L-histidine from 5-phospho-alpha-D-ribose 1-diphosphate: step 4/9.</text>
</comment>
<comment type="subcellular location">
    <subcellularLocation>
        <location evidence="1">Cytoplasm</location>
    </subcellularLocation>
</comment>
<comment type="similarity">
    <text evidence="1">Belongs to the HisA/HisF family.</text>
</comment>
<protein>
    <recommendedName>
        <fullName evidence="1">1-(5-phosphoribosyl)-5-[(5-phosphoribosylamino)methylideneamino] imidazole-4-carboxamide isomerase</fullName>
        <ecNumber evidence="1">5.3.1.16</ecNumber>
    </recommendedName>
    <alternativeName>
        <fullName evidence="1">Phosphoribosylformimino-5-aminoimidazole carboxamide ribotide isomerase</fullName>
    </alternativeName>
</protein>
<keyword id="KW-0028">Amino-acid biosynthesis</keyword>
<keyword id="KW-0963">Cytoplasm</keyword>
<keyword id="KW-0368">Histidine biosynthesis</keyword>
<keyword id="KW-0413">Isomerase</keyword>
<name>HIS4_CUTAK</name>